<dbReference type="EMBL" id="AM410160">
    <property type="protein sequence ID" value="CAL68970.1"/>
    <property type="molecule type" value="Genomic_DNA"/>
</dbReference>
<dbReference type="RefSeq" id="XP_005568665.1">
    <property type="nucleotide sequence ID" value="XM_005568608.2"/>
</dbReference>
<dbReference type="SMR" id="A4H255"/>
<dbReference type="STRING" id="9541.ENSMFAP00000033998"/>
<dbReference type="GeneID" id="102132494"/>
<dbReference type="KEGG" id="mcf:102132494"/>
<dbReference type="CTD" id="245939"/>
<dbReference type="VEuPathDB" id="HostDB:ENSMFAG00000003500"/>
<dbReference type="eggNOG" id="ENOG502TM18">
    <property type="taxonomic scope" value="Eukaryota"/>
</dbReference>
<dbReference type="OMA" id="ISEMGCL"/>
<dbReference type="Proteomes" id="UP000233100">
    <property type="component" value="Chromosome 10"/>
</dbReference>
<dbReference type="GO" id="GO:0005576">
    <property type="term" value="C:extracellular region"/>
    <property type="evidence" value="ECO:0007669"/>
    <property type="project" value="UniProtKB-SubCell"/>
</dbReference>
<dbReference type="GO" id="GO:0042742">
    <property type="term" value="P:defense response to bacterium"/>
    <property type="evidence" value="ECO:0007669"/>
    <property type="project" value="UniProtKB-KW"/>
</dbReference>
<dbReference type="GO" id="GO:0045087">
    <property type="term" value="P:innate immune response"/>
    <property type="evidence" value="ECO:0007669"/>
    <property type="project" value="InterPro"/>
</dbReference>
<dbReference type="InterPro" id="IPR050544">
    <property type="entry name" value="Beta-defensin"/>
</dbReference>
<dbReference type="InterPro" id="IPR025933">
    <property type="entry name" value="Beta_defensin_dom"/>
</dbReference>
<dbReference type="PANTHER" id="PTHR15001:SF3">
    <property type="entry name" value="BETA-DEFENSIN 123"/>
    <property type="match status" value="1"/>
</dbReference>
<dbReference type="PANTHER" id="PTHR15001">
    <property type="entry name" value="BETA-DEFENSIN 123-RELATED"/>
    <property type="match status" value="1"/>
</dbReference>
<dbReference type="Pfam" id="PF13841">
    <property type="entry name" value="Defensin_beta_2"/>
    <property type="match status" value="1"/>
</dbReference>
<comment type="function">
    <text evidence="3">Has antibacterial activity.</text>
</comment>
<comment type="subcellular location">
    <subcellularLocation>
        <location evidence="3">Secreted</location>
    </subcellularLocation>
</comment>
<comment type="similarity">
    <text evidence="3">Belongs to the beta-defensin family.</text>
</comment>
<reference key="1">
    <citation type="submission" date="2006-11" db="EMBL/GenBank/DDBJ databases">
        <title>Evolution and sequence variation of human beta-defensin genes.</title>
        <authorList>
            <person name="Hollox E.J."/>
            <person name="Armour J.A.L."/>
        </authorList>
    </citation>
    <scope>NUCLEOTIDE SEQUENCE [GENOMIC DNA]</scope>
</reference>
<gene>
    <name type="primary">DEFB128</name>
</gene>
<protein>
    <recommendedName>
        <fullName>Beta-defensin 128</fullName>
    </recommendedName>
    <alternativeName>
        <fullName>Defensin, beta 128</fullName>
    </alternativeName>
</protein>
<organism>
    <name type="scientific">Macaca fascicularis</name>
    <name type="common">Crab-eating macaque</name>
    <name type="synonym">Cynomolgus monkey</name>
    <dbReference type="NCBI Taxonomy" id="9541"/>
    <lineage>
        <taxon>Eukaryota</taxon>
        <taxon>Metazoa</taxon>
        <taxon>Chordata</taxon>
        <taxon>Craniata</taxon>
        <taxon>Vertebrata</taxon>
        <taxon>Euteleostomi</taxon>
        <taxon>Mammalia</taxon>
        <taxon>Eutheria</taxon>
        <taxon>Euarchontoglires</taxon>
        <taxon>Primates</taxon>
        <taxon>Haplorrhini</taxon>
        <taxon>Catarrhini</taxon>
        <taxon>Cercopithecidae</taxon>
        <taxon>Cercopithecinae</taxon>
        <taxon>Macaca</taxon>
    </lineage>
</organism>
<sequence>MKLFLVLIILLFEVLTDGARLKKCFNNVTGYCRKKCKVGEIHEIGCLSGKLCCVNDEENKKHVPFKKPHQQPVEKLSVQQDYVILPTITIFTV</sequence>
<proteinExistence type="inferred from homology"/>
<evidence type="ECO:0000250" key="1"/>
<evidence type="ECO:0000255" key="2"/>
<evidence type="ECO:0000305" key="3"/>
<keyword id="KW-0044">Antibiotic</keyword>
<keyword id="KW-0929">Antimicrobial</keyword>
<keyword id="KW-0211">Defensin</keyword>
<keyword id="KW-1015">Disulfide bond</keyword>
<keyword id="KW-1185">Reference proteome</keyword>
<keyword id="KW-0964">Secreted</keyword>
<keyword id="KW-0732">Signal</keyword>
<accession>A4H255</accession>
<feature type="signal peptide" evidence="2">
    <location>
        <begin position="1"/>
        <end position="18"/>
    </location>
</feature>
<feature type="chain" id="PRO_0000289852" description="Beta-defensin 128">
    <location>
        <begin position="19"/>
        <end position="93"/>
    </location>
</feature>
<feature type="disulfide bond" evidence="1">
    <location>
        <begin position="24"/>
        <end position="52"/>
    </location>
</feature>
<feature type="disulfide bond" evidence="1">
    <location>
        <begin position="32"/>
        <end position="46"/>
    </location>
</feature>
<feature type="disulfide bond" evidence="1">
    <location>
        <begin position="36"/>
        <end position="53"/>
    </location>
</feature>
<name>DB128_MACFA</name>